<evidence type="ECO:0000255" key="1">
    <source>
        <dbReference type="HAMAP-Rule" id="MF_00766"/>
    </source>
</evidence>
<gene>
    <name evidence="1" type="primary">mtgA</name>
    <name type="ordered locus">YPTS_3682</name>
</gene>
<protein>
    <recommendedName>
        <fullName evidence="1">Biosynthetic peptidoglycan transglycosylase</fullName>
        <ecNumber evidence="1">2.4.99.28</ecNumber>
    </recommendedName>
    <alternativeName>
        <fullName evidence="1">Glycan polymerase</fullName>
    </alternativeName>
    <alternativeName>
        <fullName evidence="1">Peptidoglycan glycosyltransferase MtgA</fullName>
        <shortName evidence="1">PGT</shortName>
    </alternativeName>
</protein>
<name>MTGA_YERPB</name>
<proteinExistence type="inferred from homology"/>
<sequence>MISVRRGLSQLWYWGKRGVIGIIALWMAGILIFAFLPVPFSMVMIERQLGAWLTGDFAYVAHSDWVPMDEISPYMALAVMAAEDQKFPDHWGFDVGAIESALSHNQRNQKRIRGASTLSQQTAKNVFLWDGRSWVRKGLEVGLTAGIELIWTKRRILTVYLNIAEFGNGIFGVEAAARHFFNKPASKLSASEAALLAAVLPNPLRFKVNAPSGYVISRQQWILRQMHQLGGKTFLQENTLD</sequence>
<dbReference type="EC" id="2.4.99.28" evidence="1"/>
<dbReference type="EMBL" id="CP001048">
    <property type="protein sequence ID" value="ACC90635.1"/>
    <property type="molecule type" value="Genomic_DNA"/>
</dbReference>
<dbReference type="RefSeq" id="WP_011193141.1">
    <property type="nucleotide sequence ID" value="NZ_CP009780.1"/>
</dbReference>
<dbReference type="SMR" id="B2K3Y6"/>
<dbReference type="CAZy" id="GT51">
    <property type="family name" value="Glycosyltransferase Family 51"/>
</dbReference>
<dbReference type="GeneID" id="49784516"/>
<dbReference type="KEGG" id="ypb:YPTS_3682"/>
<dbReference type="PATRIC" id="fig|502801.10.peg.3138"/>
<dbReference type="UniPathway" id="UPA00219"/>
<dbReference type="GO" id="GO:0009274">
    <property type="term" value="C:peptidoglycan-based cell wall"/>
    <property type="evidence" value="ECO:0007669"/>
    <property type="project" value="InterPro"/>
</dbReference>
<dbReference type="GO" id="GO:0005886">
    <property type="term" value="C:plasma membrane"/>
    <property type="evidence" value="ECO:0007669"/>
    <property type="project" value="UniProtKB-SubCell"/>
</dbReference>
<dbReference type="GO" id="GO:0016763">
    <property type="term" value="F:pentosyltransferase activity"/>
    <property type="evidence" value="ECO:0007669"/>
    <property type="project" value="InterPro"/>
</dbReference>
<dbReference type="GO" id="GO:0008955">
    <property type="term" value="F:peptidoglycan glycosyltransferase activity"/>
    <property type="evidence" value="ECO:0007669"/>
    <property type="project" value="UniProtKB-UniRule"/>
</dbReference>
<dbReference type="GO" id="GO:0071555">
    <property type="term" value="P:cell wall organization"/>
    <property type="evidence" value="ECO:0007669"/>
    <property type="project" value="UniProtKB-KW"/>
</dbReference>
<dbReference type="GO" id="GO:0009252">
    <property type="term" value="P:peptidoglycan biosynthetic process"/>
    <property type="evidence" value="ECO:0007669"/>
    <property type="project" value="UniProtKB-UniRule"/>
</dbReference>
<dbReference type="GO" id="GO:0008360">
    <property type="term" value="P:regulation of cell shape"/>
    <property type="evidence" value="ECO:0007669"/>
    <property type="project" value="UniProtKB-KW"/>
</dbReference>
<dbReference type="Gene3D" id="1.10.3810.10">
    <property type="entry name" value="Biosynthetic peptidoglycan transglycosylase-like"/>
    <property type="match status" value="1"/>
</dbReference>
<dbReference type="HAMAP" id="MF_00766">
    <property type="entry name" value="PGT_MtgA"/>
    <property type="match status" value="1"/>
</dbReference>
<dbReference type="InterPro" id="IPR001264">
    <property type="entry name" value="Glyco_trans_51"/>
</dbReference>
<dbReference type="InterPro" id="IPR023346">
    <property type="entry name" value="Lysozyme-like_dom_sf"/>
</dbReference>
<dbReference type="InterPro" id="IPR036950">
    <property type="entry name" value="PBP_transglycosylase"/>
</dbReference>
<dbReference type="InterPro" id="IPR011812">
    <property type="entry name" value="Pep_trsgly"/>
</dbReference>
<dbReference type="NCBIfam" id="TIGR02070">
    <property type="entry name" value="mono_pep_trsgly"/>
    <property type="match status" value="1"/>
</dbReference>
<dbReference type="PANTHER" id="PTHR30400:SF0">
    <property type="entry name" value="BIOSYNTHETIC PEPTIDOGLYCAN TRANSGLYCOSYLASE"/>
    <property type="match status" value="1"/>
</dbReference>
<dbReference type="PANTHER" id="PTHR30400">
    <property type="entry name" value="MONOFUNCTIONAL BIOSYNTHETIC PEPTIDOGLYCAN TRANSGLYCOSYLASE"/>
    <property type="match status" value="1"/>
</dbReference>
<dbReference type="Pfam" id="PF00912">
    <property type="entry name" value="Transgly"/>
    <property type="match status" value="1"/>
</dbReference>
<dbReference type="SUPFAM" id="SSF53955">
    <property type="entry name" value="Lysozyme-like"/>
    <property type="match status" value="1"/>
</dbReference>
<feature type="chain" id="PRO_1000133615" description="Biosynthetic peptidoglycan transglycosylase">
    <location>
        <begin position="1"/>
        <end position="241"/>
    </location>
</feature>
<feature type="transmembrane region" description="Helical" evidence="1">
    <location>
        <begin position="18"/>
        <end position="38"/>
    </location>
</feature>
<organism>
    <name type="scientific">Yersinia pseudotuberculosis serotype IB (strain PB1/+)</name>
    <dbReference type="NCBI Taxonomy" id="502801"/>
    <lineage>
        <taxon>Bacteria</taxon>
        <taxon>Pseudomonadati</taxon>
        <taxon>Pseudomonadota</taxon>
        <taxon>Gammaproteobacteria</taxon>
        <taxon>Enterobacterales</taxon>
        <taxon>Yersiniaceae</taxon>
        <taxon>Yersinia</taxon>
    </lineage>
</organism>
<keyword id="KW-0997">Cell inner membrane</keyword>
<keyword id="KW-1003">Cell membrane</keyword>
<keyword id="KW-0133">Cell shape</keyword>
<keyword id="KW-0961">Cell wall biogenesis/degradation</keyword>
<keyword id="KW-0328">Glycosyltransferase</keyword>
<keyword id="KW-0472">Membrane</keyword>
<keyword id="KW-0573">Peptidoglycan synthesis</keyword>
<keyword id="KW-0808">Transferase</keyword>
<keyword id="KW-0812">Transmembrane</keyword>
<keyword id="KW-1133">Transmembrane helix</keyword>
<reference key="1">
    <citation type="submission" date="2008-04" db="EMBL/GenBank/DDBJ databases">
        <title>Complete sequence of Yersinia pseudotuberculosis PB1/+.</title>
        <authorList>
            <person name="Copeland A."/>
            <person name="Lucas S."/>
            <person name="Lapidus A."/>
            <person name="Glavina del Rio T."/>
            <person name="Dalin E."/>
            <person name="Tice H."/>
            <person name="Bruce D."/>
            <person name="Goodwin L."/>
            <person name="Pitluck S."/>
            <person name="Munk A.C."/>
            <person name="Brettin T."/>
            <person name="Detter J.C."/>
            <person name="Han C."/>
            <person name="Tapia R."/>
            <person name="Schmutz J."/>
            <person name="Larimer F."/>
            <person name="Land M."/>
            <person name="Hauser L."/>
            <person name="Challacombe J.F."/>
            <person name="Green L."/>
            <person name="Lindler L.E."/>
            <person name="Nikolich M.P."/>
            <person name="Richardson P."/>
        </authorList>
    </citation>
    <scope>NUCLEOTIDE SEQUENCE [LARGE SCALE GENOMIC DNA]</scope>
    <source>
        <strain>PB1/+</strain>
    </source>
</reference>
<accession>B2K3Y6</accession>
<comment type="function">
    <text evidence="1">Peptidoglycan polymerase that catalyzes glycan chain elongation from lipid-linked precursors.</text>
</comment>
<comment type="catalytic activity">
    <reaction evidence="1">
        <text>[GlcNAc-(1-&gt;4)-Mur2Ac(oyl-L-Ala-gamma-D-Glu-L-Lys-D-Ala-D-Ala)](n)-di-trans,octa-cis-undecaprenyl diphosphate + beta-D-GlcNAc-(1-&gt;4)-Mur2Ac(oyl-L-Ala-gamma-D-Glu-L-Lys-D-Ala-D-Ala)-di-trans,octa-cis-undecaprenyl diphosphate = [GlcNAc-(1-&gt;4)-Mur2Ac(oyl-L-Ala-gamma-D-Glu-L-Lys-D-Ala-D-Ala)](n+1)-di-trans,octa-cis-undecaprenyl diphosphate + di-trans,octa-cis-undecaprenyl diphosphate + H(+)</text>
        <dbReference type="Rhea" id="RHEA:23708"/>
        <dbReference type="Rhea" id="RHEA-COMP:9602"/>
        <dbReference type="Rhea" id="RHEA-COMP:9603"/>
        <dbReference type="ChEBI" id="CHEBI:15378"/>
        <dbReference type="ChEBI" id="CHEBI:58405"/>
        <dbReference type="ChEBI" id="CHEBI:60033"/>
        <dbReference type="ChEBI" id="CHEBI:78435"/>
        <dbReference type="EC" id="2.4.99.28"/>
    </reaction>
</comment>
<comment type="pathway">
    <text evidence="1">Cell wall biogenesis; peptidoglycan biosynthesis.</text>
</comment>
<comment type="subcellular location">
    <subcellularLocation>
        <location evidence="1">Cell inner membrane</location>
        <topology evidence="1">Single-pass membrane protein</topology>
    </subcellularLocation>
</comment>
<comment type="similarity">
    <text evidence="1">Belongs to the glycosyltransferase 51 family.</text>
</comment>